<keyword id="KW-0175">Coiled coil</keyword>
<keyword id="KW-1185">Reference proteome</keyword>
<proteinExistence type="inferred from homology"/>
<reference key="1">
    <citation type="journal article" date="1998" name="Science">
        <title>Genome sequence of the nematode C. elegans: a platform for investigating biology.</title>
        <authorList>
            <consortium name="The C. elegans sequencing consortium"/>
        </authorList>
    </citation>
    <scope>NUCLEOTIDE SEQUENCE [LARGE SCALE GENOMIC DNA]</scope>
    <source>
        <strain>Bristol N2</strain>
    </source>
</reference>
<dbReference type="EMBL" id="Z79752">
    <property type="protein sequence ID" value="CAB02078.2"/>
    <property type="molecule type" value="Genomic_DNA"/>
</dbReference>
<dbReference type="PIR" id="T20328">
    <property type="entry name" value="T20328"/>
</dbReference>
<dbReference type="RefSeq" id="NP_001369982.1">
    <property type="nucleotide sequence ID" value="NM_001383397.2"/>
</dbReference>
<dbReference type="RefSeq" id="NP_492159.2">
    <property type="nucleotide sequence ID" value="NM_059758.6"/>
</dbReference>
<dbReference type="SMR" id="Q93408"/>
<dbReference type="BioGRID" id="48741">
    <property type="interactions" value="1"/>
</dbReference>
<dbReference type="FunCoup" id="Q93408">
    <property type="interactions" value="1686"/>
</dbReference>
<dbReference type="STRING" id="6239.D2005.3.1"/>
<dbReference type="iPTMnet" id="Q93408"/>
<dbReference type="PaxDb" id="6239-D2005.3"/>
<dbReference type="PeptideAtlas" id="Q93408"/>
<dbReference type="EnsemblMetazoa" id="D2005.3.1">
    <property type="protein sequence ID" value="D2005.3.1"/>
    <property type="gene ID" value="WBGene00008398"/>
</dbReference>
<dbReference type="GeneID" id="183935"/>
<dbReference type="UCSC" id="D2005.3">
    <property type="organism name" value="c. elegans"/>
</dbReference>
<dbReference type="AGR" id="WB:WBGene00008398"/>
<dbReference type="WormBase" id="D2005.3">
    <property type="protein sequence ID" value="CE32341"/>
    <property type="gene ID" value="WBGene00008398"/>
</dbReference>
<dbReference type="eggNOG" id="KOG3431">
    <property type="taxonomic scope" value="Eukaryota"/>
</dbReference>
<dbReference type="GeneTree" id="ENSGT00390000011085"/>
<dbReference type="HOGENOM" id="CLU_122978_4_0_1"/>
<dbReference type="InParanoid" id="Q93408"/>
<dbReference type="OMA" id="QAENQEN"/>
<dbReference type="OrthoDB" id="10252486at2759"/>
<dbReference type="PhylomeDB" id="Q93408"/>
<dbReference type="PRO" id="PR:Q93408"/>
<dbReference type="Proteomes" id="UP000001940">
    <property type="component" value="Chromosome I"/>
</dbReference>
<dbReference type="Bgee" id="WBGene00008398">
    <property type="expression patterns" value="Expressed in embryo and 4 other cell types or tissues"/>
</dbReference>
<dbReference type="GO" id="GO:0005829">
    <property type="term" value="C:cytosol"/>
    <property type="evidence" value="ECO:0000318"/>
    <property type="project" value="GO_Central"/>
</dbReference>
<dbReference type="GO" id="GO:0005634">
    <property type="term" value="C:nucleus"/>
    <property type="evidence" value="ECO:0000318"/>
    <property type="project" value="GO_Central"/>
</dbReference>
<dbReference type="GO" id="GO:0003677">
    <property type="term" value="F:DNA binding"/>
    <property type="evidence" value="ECO:0007669"/>
    <property type="project" value="InterPro"/>
</dbReference>
<dbReference type="FunFam" id="1.10.8.140:FF:000010">
    <property type="entry name" value="Uncharacterized protein D2005.3"/>
    <property type="match status" value="1"/>
</dbReference>
<dbReference type="Gene3D" id="1.10.8.140">
    <property type="entry name" value="PDCD5-like"/>
    <property type="match status" value="1"/>
</dbReference>
<dbReference type="InterPro" id="IPR002836">
    <property type="entry name" value="PDCD5-like"/>
</dbReference>
<dbReference type="InterPro" id="IPR036883">
    <property type="entry name" value="PDCD5-like_sf"/>
</dbReference>
<dbReference type="PANTHER" id="PTHR10840">
    <property type="entry name" value="PROGRAMMED CELL DEATH PROTEIN 5"/>
    <property type="match status" value="1"/>
</dbReference>
<dbReference type="PANTHER" id="PTHR10840:SF0">
    <property type="entry name" value="PROGRAMMED CELL DEATH PROTEIN 5"/>
    <property type="match status" value="1"/>
</dbReference>
<dbReference type="Pfam" id="PF01984">
    <property type="entry name" value="dsDNA_bind"/>
    <property type="match status" value="1"/>
</dbReference>
<dbReference type="PIRSF" id="PIRSF015730">
    <property type="entry name" value="TFAR19"/>
    <property type="match status" value="1"/>
</dbReference>
<dbReference type="SUPFAM" id="SSF46950">
    <property type="entry name" value="Double-stranded DNA-binding domain"/>
    <property type="match status" value="1"/>
</dbReference>
<evidence type="ECO:0000255" key="1"/>
<evidence type="ECO:0000256" key="2">
    <source>
        <dbReference type="SAM" id="MobiDB-lite"/>
    </source>
</evidence>
<evidence type="ECO:0000305" key="3"/>
<comment type="similarity">
    <text evidence="3">Belongs to the PDCD5 family.</text>
</comment>
<sequence length="130" mass="14434">MEILNQFSQFSPNMEAQGASSIPQPSQDAHEKARQQAENQETAKNGMISQILDQAAMQRLSNLAVAKPEKAQMVEAALINMARRGQLSGKMTDDGLKALMERVSAQTQKATSVKFDRRRNELDSDEELDL</sequence>
<feature type="chain" id="PRO_0000121547" description="Uncharacterized protein D2005.3">
    <location>
        <begin position="1"/>
        <end position="130"/>
    </location>
</feature>
<feature type="region of interest" description="Disordered" evidence="2">
    <location>
        <begin position="1"/>
        <end position="46"/>
    </location>
</feature>
<feature type="region of interest" description="Disordered" evidence="2">
    <location>
        <begin position="103"/>
        <end position="130"/>
    </location>
</feature>
<feature type="coiled-coil region" evidence="1">
    <location>
        <begin position="27"/>
        <end position="51"/>
    </location>
</feature>
<feature type="compositionally biased region" description="Polar residues" evidence="2">
    <location>
        <begin position="1"/>
        <end position="27"/>
    </location>
</feature>
<feature type="compositionally biased region" description="Polar residues" evidence="2">
    <location>
        <begin position="36"/>
        <end position="46"/>
    </location>
</feature>
<accession>Q93408</accession>
<organism>
    <name type="scientific">Caenorhabditis elegans</name>
    <dbReference type="NCBI Taxonomy" id="6239"/>
    <lineage>
        <taxon>Eukaryota</taxon>
        <taxon>Metazoa</taxon>
        <taxon>Ecdysozoa</taxon>
        <taxon>Nematoda</taxon>
        <taxon>Chromadorea</taxon>
        <taxon>Rhabditida</taxon>
        <taxon>Rhabditina</taxon>
        <taxon>Rhabditomorpha</taxon>
        <taxon>Rhabditoidea</taxon>
        <taxon>Rhabditidae</taxon>
        <taxon>Peloderinae</taxon>
        <taxon>Caenorhabditis</taxon>
    </lineage>
</organism>
<gene>
    <name type="ORF">D2005.3</name>
</gene>
<protein>
    <recommendedName>
        <fullName>Uncharacterized protein D2005.3</fullName>
    </recommendedName>
</protein>
<name>YRGK_CAEEL</name>